<organism>
    <name type="scientific">Burkholderia ambifaria (strain MC40-6)</name>
    <dbReference type="NCBI Taxonomy" id="398577"/>
    <lineage>
        <taxon>Bacteria</taxon>
        <taxon>Pseudomonadati</taxon>
        <taxon>Pseudomonadota</taxon>
        <taxon>Betaproteobacteria</taxon>
        <taxon>Burkholderiales</taxon>
        <taxon>Burkholderiaceae</taxon>
        <taxon>Burkholderia</taxon>
        <taxon>Burkholderia cepacia complex</taxon>
    </lineage>
</organism>
<keyword id="KW-0067">ATP-binding</keyword>
<keyword id="KW-0418">Kinase</keyword>
<keyword id="KW-0460">Magnesium</keyword>
<keyword id="KW-0479">Metal-binding</keyword>
<keyword id="KW-0547">Nucleotide-binding</keyword>
<keyword id="KW-0711">Selenium</keyword>
<keyword id="KW-0808">Transferase</keyword>
<dbReference type="EC" id="2.7.9.3" evidence="1"/>
<dbReference type="EMBL" id="CP001026">
    <property type="protein sequence ID" value="ACB67683.1"/>
    <property type="molecule type" value="Genomic_DNA"/>
</dbReference>
<dbReference type="SMR" id="B1Z181"/>
<dbReference type="KEGG" id="bac:BamMC406_5238"/>
<dbReference type="HOGENOM" id="CLU_032859_0_1_4"/>
<dbReference type="Proteomes" id="UP000001680">
    <property type="component" value="Chromosome 2"/>
</dbReference>
<dbReference type="GO" id="GO:0005737">
    <property type="term" value="C:cytoplasm"/>
    <property type="evidence" value="ECO:0007669"/>
    <property type="project" value="TreeGrafter"/>
</dbReference>
<dbReference type="GO" id="GO:0005524">
    <property type="term" value="F:ATP binding"/>
    <property type="evidence" value="ECO:0007669"/>
    <property type="project" value="UniProtKB-UniRule"/>
</dbReference>
<dbReference type="GO" id="GO:0000287">
    <property type="term" value="F:magnesium ion binding"/>
    <property type="evidence" value="ECO:0007669"/>
    <property type="project" value="UniProtKB-UniRule"/>
</dbReference>
<dbReference type="GO" id="GO:0004756">
    <property type="term" value="F:selenide, water dikinase activity"/>
    <property type="evidence" value="ECO:0007669"/>
    <property type="project" value="UniProtKB-UniRule"/>
</dbReference>
<dbReference type="GO" id="GO:0016260">
    <property type="term" value="P:selenocysteine biosynthetic process"/>
    <property type="evidence" value="ECO:0007669"/>
    <property type="project" value="InterPro"/>
</dbReference>
<dbReference type="CDD" id="cd02195">
    <property type="entry name" value="SelD"/>
    <property type="match status" value="1"/>
</dbReference>
<dbReference type="FunFam" id="3.30.1330.10:FF:000003">
    <property type="entry name" value="Selenide, water dikinase"/>
    <property type="match status" value="1"/>
</dbReference>
<dbReference type="FunFam" id="3.90.650.10:FF:000004">
    <property type="entry name" value="Selenide, water dikinase"/>
    <property type="match status" value="1"/>
</dbReference>
<dbReference type="Gene3D" id="3.90.650.10">
    <property type="entry name" value="PurM-like C-terminal domain"/>
    <property type="match status" value="1"/>
</dbReference>
<dbReference type="Gene3D" id="3.30.1330.10">
    <property type="entry name" value="PurM-like, N-terminal domain"/>
    <property type="match status" value="1"/>
</dbReference>
<dbReference type="HAMAP" id="MF_00625">
    <property type="entry name" value="SelD"/>
    <property type="match status" value="1"/>
</dbReference>
<dbReference type="InterPro" id="IPR010918">
    <property type="entry name" value="PurM-like_C_dom"/>
</dbReference>
<dbReference type="InterPro" id="IPR036676">
    <property type="entry name" value="PurM-like_C_sf"/>
</dbReference>
<dbReference type="InterPro" id="IPR016188">
    <property type="entry name" value="PurM-like_N"/>
</dbReference>
<dbReference type="InterPro" id="IPR036921">
    <property type="entry name" value="PurM-like_N_sf"/>
</dbReference>
<dbReference type="InterPro" id="IPR023061">
    <property type="entry name" value="SelD_I"/>
</dbReference>
<dbReference type="InterPro" id="IPR004536">
    <property type="entry name" value="SPS/SelD"/>
</dbReference>
<dbReference type="NCBIfam" id="NF002098">
    <property type="entry name" value="PRK00943.1"/>
    <property type="match status" value="1"/>
</dbReference>
<dbReference type="NCBIfam" id="TIGR00476">
    <property type="entry name" value="selD"/>
    <property type="match status" value="1"/>
</dbReference>
<dbReference type="PANTHER" id="PTHR10256:SF0">
    <property type="entry name" value="INACTIVE SELENIDE, WATER DIKINASE-LIKE PROTEIN-RELATED"/>
    <property type="match status" value="1"/>
</dbReference>
<dbReference type="PANTHER" id="PTHR10256">
    <property type="entry name" value="SELENIDE, WATER DIKINASE"/>
    <property type="match status" value="1"/>
</dbReference>
<dbReference type="Pfam" id="PF00586">
    <property type="entry name" value="AIRS"/>
    <property type="match status" value="1"/>
</dbReference>
<dbReference type="Pfam" id="PF02769">
    <property type="entry name" value="AIRS_C"/>
    <property type="match status" value="1"/>
</dbReference>
<dbReference type="PIRSF" id="PIRSF036407">
    <property type="entry name" value="Selenphspht_syn"/>
    <property type="match status" value="1"/>
</dbReference>
<dbReference type="SUPFAM" id="SSF56042">
    <property type="entry name" value="PurM C-terminal domain-like"/>
    <property type="match status" value="1"/>
</dbReference>
<dbReference type="SUPFAM" id="SSF55326">
    <property type="entry name" value="PurM N-terminal domain-like"/>
    <property type="match status" value="1"/>
</dbReference>
<accession>B1Z181</accession>
<name>SELD_BURA4</name>
<gene>
    <name evidence="1" type="primary">selD</name>
    <name type="ordered locus">BamMC406_5238</name>
</gene>
<reference key="1">
    <citation type="submission" date="2008-04" db="EMBL/GenBank/DDBJ databases">
        <title>Complete sequence of chromosome 2 of Burkholderia ambifaria MC40-6.</title>
        <authorList>
            <person name="Copeland A."/>
            <person name="Lucas S."/>
            <person name="Lapidus A."/>
            <person name="Glavina del Rio T."/>
            <person name="Dalin E."/>
            <person name="Tice H."/>
            <person name="Pitluck S."/>
            <person name="Chain P."/>
            <person name="Malfatti S."/>
            <person name="Shin M."/>
            <person name="Vergez L."/>
            <person name="Lang D."/>
            <person name="Schmutz J."/>
            <person name="Larimer F."/>
            <person name="Land M."/>
            <person name="Hauser L."/>
            <person name="Kyrpides N."/>
            <person name="Lykidis A."/>
            <person name="Ramette A."/>
            <person name="Konstantinidis K."/>
            <person name="Tiedje J."/>
            <person name="Richardson P."/>
        </authorList>
    </citation>
    <scope>NUCLEOTIDE SEQUENCE [LARGE SCALE GENOMIC DNA]</scope>
    <source>
        <strain>MC40-6</strain>
    </source>
</reference>
<proteinExistence type="inferred from homology"/>
<comment type="function">
    <text evidence="1">Synthesizes selenophosphate from selenide and ATP.</text>
</comment>
<comment type="catalytic activity">
    <reaction evidence="1">
        <text>hydrogenselenide + ATP + H2O = selenophosphate + AMP + phosphate + 2 H(+)</text>
        <dbReference type="Rhea" id="RHEA:18737"/>
        <dbReference type="ChEBI" id="CHEBI:15377"/>
        <dbReference type="ChEBI" id="CHEBI:15378"/>
        <dbReference type="ChEBI" id="CHEBI:16144"/>
        <dbReference type="ChEBI" id="CHEBI:29317"/>
        <dbReference type="ChEBI" id="CHEBI:30616"/>
        <dbReference type="ChEBI" id="CHEBI:43474"/>
        <dbReference type="ChEBI" id="CHEBI:456215"/>
        <dbReference type="EC" id="2.7.9.3"/>
    </reaction>
</comment>
<comment type="cofactor">
    <cofactor evidence="1">
        <name>Mg(2+)</name>
        <dbReference type="ChEBI" id="CHEBI:18420"/>
    </cofactor>
    <text evidence="1">Binds 1 Mg(2+) ion per monomer.</text>
</comment>
<comment type="subunit">
    <text evidence="1">Homodimer.</text>
</comment>
<comment type="similarity">
    <text evidence="1">Belongs to the selenophosphate synthase 1 family. Class I subfamily.</text>
</comment>
<protein>
    <recommendedName>
        <fullName evidence="1">Selenide, water dikinase</fullName>
        <ecNumber evidence="1">2.7.9.3</ecNumber>
    </recommendedName>
    <alternativeName>
        <fullName evidence="1">Selenium donor protein</fullName>
    </alternativeName>
    <alternativeName>
        <fullName evidence="1">Selenophosphate synthase</fullName>
    </alternativeName>
</protein>
<evidence type="ECO:0000255" key="1">
    <source>
        <dbReference type="HAMAP-Rule" id="MF_00625"/>
    </source>
</evidence>
<sequence length="354" mass="36138">MTEATLTPPAVPRLTSLSHGGGCGCKIAPGVLSELLKRATPPALFPDLLVGTETSDDAAVYRLNDEQAIVATTDFFMPIVDDPFDFGRIAATNALSDVYAMGGKPILALALVGMPINVLPHETIAAILRGGESVCAEAGIPVAGGHSIDSVEPIYGLAAIGVVHPSRVKRNAAARAGDVLVLGKPLGVGVLSAALKKNQLDAAGYAQMVATTTKLNRPGAELAALPGVHALTDVTGFGLLGHTLELARGANLTARVHYASLPWLAGVEAFVADGVFTGASGRNWAAYGTDVRLADGLPPVAQALLTDPQTSGGLLVACAPEAVDDVLACFRADGFDRAAVIGEMVDGPSRVDVA</sequence>
<feature type="chain" id="PRO_1000130515" description="Selenide, water dikinase">
    <location>
        <begin position="1"/>
        <end position="354"/>
    </location>
</feature>
<feature type="active site" evidence="1">
    <location>
        <position position="23"/>
    </location>
</feature>
<feature type="binding site" description="in other chain" evidence="1">
    <location>
        <position position="26"/>
    </location>
    <ligand>
        <name>ATP</name>
        <dbReference type="ChEBI" id="CHEBI:30616"/>
        <note>ligand shared between dimeric partners</note>
    </ligand>
</feature>
<feature type="binding site" description="in other chain" evidence="1">
    <location>
        <begin position="54"/>
        <end position="56"/>
    </location>
    <ligand>
        <name>ATP</name>
        <dbReference type="ChEBI" id="CHEBI:30616"/>
        <note>ligand shared between dimeric partners</note>
    </ligand>
</feature>
<feature type="binding site" evidence="1">
    <location>
        <position position="57"/>
    </location>
    <ligand>
        <name>Mg(2+)</name>
        <dbReference type="ChEBI" id="CHEBI:18420"/>
    </ligand>
</feature>
<feature type="binding site" description="in other chain" evidence="1">
    <location>
        <position position="74"/>
    </location>
    <ligand>
        <name>ATP</name>
        <dbReference type="ChEBI" id="CHEBI:30616"/>
        <note>ligand shared between dimeric partners</note>
    </ligand>
</feature>
<feature type="binding site" description="in other chain" evidence="1">
    <location>
        <position position="97"/>
    </location>
    <ligand>
        <name>ATP</name>
        <dbReference type="ChEBI" id="CHEBI:30616"/>
        <note>ligand shared between dimeric partners</note>
    </ligand>
</feature>
<feature type="binding site" evidence="1">
    <location>
        <position position="97"/>
    </location>
    <ligand>
        <name>Mg(2+)</name>
        <dbReference type="ChEBI" id="CHEBI:18420"/>
    </ligand>
</feature>
<feature type="binding site" evidence="1">
    <location>
        <begin position="145"/>
        <end position="147"/>
    </location>
    <ligand>
        <name>ATP</name>
        <dbReference type="ChEBI" id="CHEBI:30616"/>
        <note>ligand shared between dimeric partners</note>
    </ligand>
</feature>
<feature type="binding site" evidence="1">
    <location>
        <position position="233"/>
    </location>
    <ligand>
        <name>Mg(2+)</name>
        <dbReference type="ChEBI" id="CHEBI:18420"/>
    </ligand>
</feature>
<feature type="site" description="Important for catalytic activity" evidence="1">
    <location>
        <position position="26"/>
    </location>
</feature>